<accession>Q54HM1</accession>
<name>Y8382_DICDI</name>
<keyword id="KW-1185">Reference proteome</keyword>
<organism>
    <name type="scientific">Dictyostelium discoideum</name>
    <name type="common">Social amoeba</name>
    <dbReference type="NCBI Taxonomy" id="44689"/>
    <lineage>
        <taxon>Eukaryota</taxon>
        <taxon>Amoebozoa</taxon>
        <taxon>Evosea</taxon>
        <taxon>Eumycetozoa</taxon>
        <taxon>Dictyostelia</taxon>
        <taxon>Dictyosteliales</taxon>
        <taxon>Dictyosteliaceae</taxon>
        <taxon>Dictyostelium</taxon>
    </lineage>
</organism>
<proteinExistence type="predicted"/>
<gene>
    <name type="ORF">DDB_G0289359</name>
</gene>
<sequence length="54" mass="6082">MSINIVHSNENNEENTNIENWTTTGTNYRNECIARCGRLFSGFNALICMKPCGV</sequence>
<dbReference type="EMBL" id="AAFI02000139">
    <property type="protein sequence ID" value="EAL62766.1"/>
    <property type="molecule type" value="Genomic_DNA"/>
</dbReference>
<dbReference type="RefSeq" id="XP_636280.1">
    <property type="nucleotide sequence ID" value="XM_631188.1"/>
</dbReference>
<dbReference type="SMR" id="Q54HM1"/>
<dbReference type="PaxDb" id="44689-DDB0188382"/>
<dbReference type="EnsemblProtists" id="EAL62766">
    <property type="protein sequence ID" value="EAL62766"/>
    <property type="gene ID" value="DDB_G0289359"/>
</dbReference>
<dbReference type="GeneID" id="8627098"/>
<dbReference type="KEGG" id="ddi:DDB_G0289359"/>
<dbReference type="dictyBase" id="DDB_G0289359"/>
<dbReference type="HOGENOM" id="CLU_3054366_0_0_1"/>
<dbReference type="InParanoid" id="Q54HM1"/>
<dbReference type="PRO" id="PR:Q54HM1"/>
<dbReference type="Proteomes" id="UP000002195">
    <property type="component" value="Chromosome 5"/>
</dbReference>
<protein>
    <recommendedName>
        <fullName>Putative uncharacterized protein DDB_G0289359</fullName>
    </recommendedName>
</protein>
<reference key="1">
    <citation type="journal article" date="2005" name="Nature">
        <title>The genome of the social amoeba Dictyostelium discoideum.</title>
        <authorList>
            <person name="Eichinger L."/>
            <person name="Pachebat J.A."/>
            <person name="Gloeckner G."/>
            <person name="Rajandream M.A."/>
            <person name="Sucgang R."/>
            <person name="Berriman M."/>
            <person name="Song J."/>
            <person name="Olsen R."/>
            <person name="Szafranski K."/>
            <person name="Xu Q."/>
            <person name="Tunggal B."/>
            <person name="Kummerfeld S."/>
            <person name="Madera M."/>
            <person name="Konfortov B.A."/>
            <person name="Rivero F."/>
            <person name="Bankier A.T."/>
            <person name="Lehmann R."/>
            <person name="Hamlin N."/>
            <person name="Davies R."/>
            <person name="Gaudet P."/>
            <person name="Fey P."/>
            <person name="Pilcher K."/>
            <person name="Chen G."/>
            <person name="Saunders D."/>
            <person name="Sodergren E.J."/>
            <person name="Davis P."/>
            <person name="Kerhornou A."/>
            <person name="Nie X."/>
            <person name="Hall N."/>
            <person name="Anjard C."/>
            <person name="Hemphill L."/>
            <person name="Bason N."/>
            <person name="Farbrother P."/>
            <person name="Desany B."/>
            <person name="Just E."/>
            <person name="Morio T."/>
            <person name="Rost R."/>
            <person name="Churcher C.M."/>
            <person name="Cooper J."/>
            <person name="Haydock S."/>
            <person name="van Driessche N."/>
            <person name="Cronin A."/>
            <person name="Goodhead I."/>
            <person name="Muzny D.M."/>
            <person name="Mourier T."/>
            <person name="Pain A."/>
            <person name="Lu M."/>
            <person name="Harper D."/>
            <person name="Lindsay R."/>
            <person name="Hauser H."/>
            <person name="James K.D."/>
            <person name="Quiles M."/>
            <person name="Madan Babu M."/>
            <person name="Saito T."/>
            <person name="Buchrieser C."/>
            <person name="Wardroper A."/>
            <person name="Felder M."/>
            <person name="Thangavelu M."/>
            <person name="Johnson D."/>
            <person name="Knights A."/>
            <person name="Loulseged H."/>
            <person name="Mungall K.L."/>
            <person name="Oliver K."/>
            <person name="Price C."/>
            <person name="Quail M.A."/>
            <person name="Urushihara H."/>
            <person name="Hernandez J."/>
            <person name="Rabbinowitsch E."/>
            <person name="Steffen D."/>
            <person name="Sanders M."/>
            <person name="Ma J."/>
            <person name="Kohara Y."/>
            <person name="Sharp S."/>
            <person name="Simmonds M.N."/>
            <person name="Spiegler S."/>
            <person name="Tivey A."/>
            <person name="Sugano S."/>
            <person name="White B."/>
            <person name="Walker D."/>
            <person name="Woodward J.R."/>
            <person name="Winckler T."/>
            <person name="Tanaka Y."/>
            <person name="Shaulsky G."/>
            <person name="Schleicher M."/>
            <person name="Weinstock G.M."/>
            <person name="Rosenthal A."/>
            <person name="Cox E.C."/>
            <person name="Chisholm R.L."/>
            <person name="Gibbs R.A."/>
            <person name="Loomis W.F."/>
            <person name="Platzer M."/>
            <person name="Kay R.R."/>
            <person name="Williams J.G."/>
            <person name="Dear P.H."/>
            <person name="Noegel A.A."/>
            <person name="Barrell B.G."/>
            <person name="Kuspa A."/>
        </authorList>
    </citation>
    <scope>NUCLEOTIDE SEQUENCE [LARGE SCALE GENOMIC DNA]</scope>
    <source>
        <strain>AX4</strain>
    </source>
</reference>
<feature type="chain" id="PRO_0000346949" description="Putative uncharacterized protein DDB_G0289359">
    <location>
        <begin position="1"/>
        <end position="54"/>
    </location>
</feature>